<gene>
    <name type="primary">rps4</name>
</gene>
<proteinExistence type="inferred from homology"/>
<organism>
    <name type="scientific">Hypopterygium laricinum</name>
    <name type="common">Moss</name>
    <name type="synonym">Hypnum laricinum</name>
    <dbReference type="NCBI Taxonomy" id="129941"/>
    <lineage>
        <taxon>Eukaryota</taxon>
        <taxon>Viridiplantae</taxon>
        <taxon>Streptophyta</taxon>
        <taxon>Embryophyta</taxon>
        <taxon>Bryophyta</taxon>
        <taxon>Bryophytina</taxon>
        <taxon>Bryopsida</taxon>
        <taxon>Bryidae</taxon>
        <taxon>Hypnanae</taxon>
        <taxon>Hookeriales</taxon>
        <taxon>Hypopterygiaceae</taxon>
        <taxon>Hypopterygium</taxon>
    </lineage>
</organism>
<reference key="1">
    <citation type="submission" date="2000-01" db="EMBL/GenBank/DDBJ databases">
        <title>A molecular approach to bryophyte systematics.</title>
        <authorList>
            <person name="Capesius I."/>
            <person name="Bloecher R."/>
        </authorList>
    </citation>
    <scope>NUCLEOTIDE SEQUENCE [GENOMIC DNA]</scope>
    <source>
        <tissue>Gametophyte</tissue>
    </source>
</reference>
<comment type="function">
    <text evidence="1">One of the primary rRNA binding proteins, it binds directly to 16S rRNA where it nucleates assembly of the body of the 30S subunit.</text>
</comment>
<comment type="function">
    <text evidence="1">With S5 and S12 plays an important role in translational accuracy.</text>
</comment>
<comment type="subunit">
    <text evidence="1">Part of the 30S ribosomal subunit. Contacts protein S5. The interaction surface between S4 and S5 is involved in control of translational fidelity (By similarity).</text>
</comment>
<comment type="subcellular location">
    <subcellularLocation>
        <location>Plastid</location>
        <location>Chloroplast</location>
    </subcellularLocation>
</comment>
<comment type="similarity">
    <text evidence="2">Belongs to the universal ribosomal protein uS4 family.</text>
</comment>
<geneLocation type="chloroplast"/>
<protein>
    <recommendedName>
        <fullName evidence="2">Small ribosomal subunit protein uS4c</fullName>
    </recommendedName>
    <alternativeName>
        <fullName>30S ribosomal protein S4, chloroplastic</fullName>
    </alternativeName>
</protein>
<name>RR4_HYPLA</name>
<keyword id="KW-0150">Chloroplast</keyword>
<keyword id="KW-0934">Plastid</keyword>
<keyword id="KW-0687">Ribonucleoprotein</keyword>
<keyword id="KW-0689">Ribosomal protein</keyword>
<keyword id="KW-0694">RNA-binding</keyword>
<keyword id="KW-0699">rRNA-binding</keyword>
<feature type="chain" id="PRO_0000132609" description="Small ribosomal subunit protein uS4c">
    <location>
        <begin position="1"/>
        <end position="202"/>
    </location>
</feature>
<feature type="domain" description="S4 RNA-binding">
    <location>
        <begin position="90"/>
        <end position="153"/>
    </location>
</feature>
<sequence length="202" mass="23567">MSRYRGPRVRIIRRLGALPGLTNKTPQLKSSSINQSTSNKKISQYRIRLEEKQKLRFHYGITERQLLNYVRIARKAKGSTGEILLQLLEMRLDNVIFRLGMTPTIPGARQLVNHRHILVNGYIVDIPSYRCKPQDFITIKNQRKSEAIISKNIEFYQKYKIPNHLTYSSLEKKGLVNQILNRKSIGLKINELLVVEYYSRQA</sequence>
<accession>P59145</accession>
<evidence type="ECO:0000250" key="1"/>
<evidence type="ECO:0000305" key="2"/>
<dbReference type="EMBL" id="AJ252291">
    <property type="protein sequence ID" value="CAC81024.1"/>
    <property type="molecule type" value="Genomic_DNA"/>
</dbReference>
<dbReference type="SMR" id="P59145"/>
<dbReference type="GO" id="GO:0009507">
    <property type="term" value="C:chloroplast"/>
    <property type="evidence" value="ECO:0007669"/>
    <property type="project" value="UniProtKB-SubCell"/>
</dbReference>
<dbReference type="GO" id="GO:0015935">
    <property type="term" value="C:small ribosomal subunit"/>
    <property type="evidence" value="ECO:0007669"/>
    <property type="project" value="InterPro"/>
</dbReference>
<dbReference type="GO" id="GO:0019843">
    <property type="term" value="F:rRNA binding"/>
    <property type="evidence" value="ECO:0007669"/>
    <property type="project" value="UniProtKB-UniRule"/>
</dbReference>
<dbReference type="GO" id="GO:0003735">
    <property type="term" value="F:structural constituent of ribosome"/>
    <property type="evidence" value="ECO:0007669"/>
    <property type="project" value="InterPro"/>
</dbReference>
<dbReference type="GO" id="GO:0042274">
    <property type="term" value="P:ribosomal small subunit biogenesis"/>
    <property type="evidence" value="ECO:0007669"/>
    <property type="project" value="TreeGrafter"/>
</dbReference>
<dbReference type="GO" id="GO:0006412">
    <property type="term" value="P:translation"/>
    <property type="evidence" value="ECO:0007669"/>
    <property type="project" value="UniProtKB-UniRule"/>
</dbReference>
<dbReference type="CDD" id="cd00165">
    <property type="entry name" value="S4"/>
    <property type="match status" value="1"/>
</dbReference>
<dbReference type="FunFam" id="1.10.1050.10:FF:000002">
    <property type="entry name" value="30S ribosomal protein S4, chloroplastic"/>
    <property type="match status" value="1"/>
</dbReference>
<dbReference type="FunFam" id="3.10.290.10:FF:000081">
    <property type="entry name" value="30S ribosomal protein S4, chloroplastic"/>
    <property type="match status" value="1"/>
</dbReference>
<dbReference type="Gene3D" id="1.10.1050.10">
    <property type="entry name" value="Ribosomal Protein S4 Delta 41, Chain A, domain 1"/>
    <property type="match status" value="1"/>
</dbReference>
<dbReference type="Gene3D" id="3.10.290.10">
    <property type="entry name" value="RNA-binding S4 domain"/>
    <property type="match status" value="1"/>
</dbReference>
<dbReference type="HAMAP" id="MF_01306_B">
    <property type="entry name" value="Ribosomal_uS4_B"/>
    <property type="match status" value="1"/>
</dbReference>
<dbReference type="InterPro" id="IPR022801">
    <property type="entry name" value="Ribosomal_uS4"/>
</dbReference>
<dbReference type="InterPro" id="IPR005709">
    <property type="entry name" value="Ribosomal_uS4_bac-type"/>
</dbReference>
<dbReference type="InterPro" id="IPR018079">
    <property type="entry name" value="Ribosomal_uS4_CS"/>
</dbReference>
<dbReference type="InterPro" id="IPR001912">
    <property type="entry name" value="Ribosomal_uS4_N"/>
</dbReference>
<dbReference type="InterPro" id="IPR002942">
    <property type="entry name" value="S4_RNA-bd"/>
</dbReference>
<dbReference type="InterPro" id="IPR036986">
    <property type="entry name" value="S4_RNA-bd_sf"/>
</dbReference>
<dbReference type="NCBIfam" id="NF003717">
    <property type="entry name" value="PRK05327.1"/>
    <property type="match status" value="1"/>
</dbReference>
<dbReference type="NCBIfam" id="TIGR01017">
    <property type="entry name" value="rpsD_bact"/>
    <property type="match status" value="1"/>
</dbReference>
<dbReference type="PANTHER" id="PTHR11831">
    <property type="entry name" value="30S 40S RIBOSOMAL PROTEIN"/>
    <property type="match status" value="1"/>
</dbReference>
<dbReference type="PANTHER" id="PTHR11831:SF4">
    <property type="entry name" value="SMALL RIBOSOMAL SUBUNIT PROTEIN US4M"/>
    <property type="match status" value="1"/>
</dbReference>
<dbReference type="Pfam" id="PF00163">
    <property type="entry name" value="Ribosomal_S4"/>
    <property type="match status" value="1"/>
</dbReference>
<dbReference type="Pfam" id="PF01479">
    <property type="entry name" value="S4"/>
    <property type="match status" value="1"/>
</dbReference>
<dbReference type="SMART" id="SM01390">
    <property type="entry name" value="Ribosomal_S4"/>
    <property type="match status" value="1"/>
</dbReference>
<dbReference type="SMART" id="SM00363">
    <property type="entry name" value="S4"/>
    <property type="match status" value="1"/>
</dbReference>
<dbReference type="SUPFAM" id="SSF55174">
    <property type="entry name" value="Alpha-L RNA-binding motif"/>
    <property type="match status" value="1"/>
</dbReference>
<dbReference type="PROSITE" id="PS00632">
    <property type="entry name" value="RIBOSOMAL_S4"/>
    <property type="match status" value="1"/>
</dbReference>
<dbReference type="PROSITE" id="PS50889">
    <property type="entry name" value="S4"/>
    <property type="match status" value="1"/>
</dbReference>